<reference key="1">
    <citation type="journal article" date="2010" name="Environ. Microbiol.">
        <title>The genome of Syntrophomonas wolfei: new insights into syntrophic metabolism and biohydrogen production.</title>
        <authorList>
            <person name="Sieber J.R."/>
            <person name="Sims D.R."/>
            <person name="Han C."/>
            <person name="Kim E."/>
            <person name="Lykidis A."/>
            <person name="Lapidus A.L."/>
            <person name="McDonnald E."/>
            <person name="Rohlin L."/>
            <person name="Culley D.E."/>
            <person name="Gunsalus R."/>
            <person name="McInerney M.J."/>
        </authorList>
    </citation>
    <scope>NUCLEOTIDE SEQUENCE [LARGE SCALE GENOMIC DNA]</scope>
    <source>
        <strain>DSM 2245B / Goettingen</strain>
    </source>
</reference>
<feature type="chain" id="PRO_1000072235" description="Glycerol-3-phosphate dehydrogenase [NAD(P)+]">
    <location>
        <begin position="1"/>
        <end position="343"/>
    </location>
</feature>
<feature type="active site" description="Proton acceptor" evidence="1">
    <location>
        <position position="192"/>
    </location>
</feature>
<feature type="binding site" evidence="1">
    <location>
        <position position="11"/>
    </location>
    <ligand>
        <name>NADPH</name>
        <dbReference type="ChEBI" id="CHEBI:57783"/>
    </ligand>
</feature>
<feature type="binding site" evidence="1">
    <location>
        <position position="12"/>
    </location>
    <ligand>
        <name>NADPH</name>
        <dbReference type="ChEBI" id="CHEBI:57783"/>
    </ligand>
</feature>
<feature type="binding site" evidence="1">
    <location>
        <position position="32"/>
    </location>
    <ligand>
        <name>NADPH</name>
        <dbReference type="ChEBI" id="CHEBI:57783"/>
    </ligand>
</feature>
<feature type="binding site" evidence="1">
    <location>
        <position position="106"/>
    </location>
    <ligand>
        <name>NADPH</name>
        <dbReference type="ChEBI" id="CHEBI:57783"/>
    </ligand>
</feature>
<feature type="binding site" evidence="1">
    <location>
        <position position="106"/>
    </location>
    <ligand>
        <name>sn-glycerol 3-phosphate</name>
        <dbReference type="ChEBI" id="CHEBI:57597"/>
    </ligand>
</feature>
<feature type="binding site" evidence="1">
    <location>
        <position position="137"/>
    </location>
    <ligand>
        <name>sn-glycerol 3-phosphate</name>
        <dbReference type="ChEBI" id="CHEBI:57597"/>
    </ligand>
</feature>
<feature type="binding site" evidence="1">
    <location>
        <position position="139"/>
    </location>
    <ligand>
        <name>sn-glycerol 3-phosphate</name>
        <dbReference type="ChEBI" id="CHEBI:57597"/>
    </ligand>
</feature>
<feature type="binding site" evidence="1">
    <location>
        <position position="141"/>
    </location>
    <ligand>
        <name>NADPH</name>
        <dbReference type="ChEBI" id="CHEBI:57783"/>
    </ligand>
</feature>
<feature type="binding site" evidence="1">
    <location>
        <position position="192"/>
    </location>
    <ligand>
        <name>sn-glycerol 3-phosphate</name>
        <dbReference type="ChEBI" id="CHEBI:57597"/>
    </ligand>
</feature>
<feature type="binding site" evidence="1">
    <location>
        <position position="245"/>
    </location>
    <ligand>
        <name>sn-glycerol 3-phosphate</name>
        <dbReference type="ChEBI" id="CHEBI:57597"/>
    </ligand>
</feature>
<feature type="binding site" evidence="1">
    <location>
        <position position="255"/>
    </location>
    <ligand>
        <name>sn-glycerol 3-phosphate</name>
        <dbReference type="ChEBI" id="CHEBI:57597"/>
    </ligand>
</feature>
<feature type="binding site" evidence="1">
    <location>
        <position position="256"/>
    </location>
    <ligand>
        <name>NADPH</name>
        <dbReference type="ChEBI" id="CHEBI:57783"/>
    </ligand>
</feature>
<feature type="binding site" evidence="1">
    <location>
        <position position="256"/>
    </location>
    <ligand>
        <name>sn-glycerol 3-phosphate</name>
        <dbReference type="ChEBI" id="CHEBI:57597"/>
    </ligand>
</feature>
<feature type="binding site" evidence="1">
    <location>
        <position position="257"/>
    </location>
    <ligand>
        <name>sn-glycerol 3-phosphate</name>
        <dbReference type="ChEBI" id="CHEBI:57597"/>
    </ligand>
</feature>
<feature type="binding site" evidence="1">
    <location>
        <position position="280"/>
    </location>
    <ligand>
        <name>NADPH</name>
        <dbReference type="ChEBI" id="CHEBI:57783"/>
    </ligand>
</feature>
<feature type="binding site" evidence="1">
    <location>
        <position position="282"/>
    </location>
    <ligand>
        <name>NADPH</name>
        <dbReference type="ChEBI" id="CHEBI:57783"/>
    </ligand>
</feature>
<organism>
    <name type="scientific">Syntrophomonas wolfei subsp. wolfei (strain DSM 2245B / Goettingen)</name>
    <dbReference type="NCBI Taxonomy" id="335541"/>
    <lineage>
        <taxon>Bacteria</taxon>
        <taxon>Bacillati</taxon>
        <taxon>Bacillota</taxon>
        <taxon>Clostridia</taxon>
        <taxon>Eubacteriales</taxon>
        <taxon>Syntrophomonadaceae</taxon>
        <taxon>Syntrophomonas</taxon>
    </lineage>
</organism>
<protein>
    <recommendedName>
        <fullName evidence="1">Glycerol-3-phosphate dehydrogenase [NAD(P)+]</fullName>
        <ecNumber evidence="1">1.1.1.94</ecNumber>
    </recommendedName>
    <alternativeName>
        <fullName evidence="1">NAD(P)(+)-dependent glycerol-3-phosphate dehydrogenase</fullName>
    </alternativeName>
    <alternativeName>
        <fullName evidence="1">NAD(P)H-dependent dihydroxyacetone-phosphate reductase</fullName>
    </alternativeName>
</protein>
<dbReference type="EC" id="1.1.1.94" evidence="1"/>
<dbReference type="EMBL" id="CP000448">
    <property type="protein sequence ID" value="ABI68631.1"/>
    <property type="molecule type" value="Genomic_DNA"/>
</dbReference>
<dbReference type="RefSeq" id="WP_011640731.1">
    <property type="nucleotide sequence ID" value="NC_008346.1"/>
</dbReference>
<dbReference type="SMR" id="Q0AXC3"/>
<dbReference type="STRING" id="335541.Swol_1323"/>
<dbReference type="KEGG" id="swo:Swol_1323"/>
<dbReference type="eggNOG" id="COG0240">
    <property type="taxonomic scope" value="Bacteria"/>
</dbReference>
<dbReference type="HOGENOM" id="CLU_033449_0_2_9"/>
<dbReference type="OrthoDB" id="9812273at2"/>
<dbReference type="UniPathway" id="UPA00940"/>
<dbReference type="Proteomes" id="UP000001968">
    <property type="component" value="Chromosome"/>
</dbReference>
<dbReference type="GO" id="GO:0005829">
    <property type="term" value="C:cytosol"/>
    <property type="evidence" value="ECO:0007669"/>
    <property type="project" value="TreeGrafter"/>
</dbReference>
<dbReference type="GO" id="GO:0047952">
    <property type="term" value="F:glycerol-3-phosphate dehydrogenase [NAD(P)+] activity"/>
    <property type="evidence" value="ECO:0007669"/>
    <property type="project" value="UniProtKB-UniRule"/>
</dbReference>
<dbReference type="GO" id="GO:0051287">
    <property type="term" value="F:NAD binding"/>
    <property type="evidence" value="ECO:0007669"/>
    <property type="project" value="InterPro"/>
</dbReference>
<dbReference type="GO" id="GO:0005975">
    <property type="term" value="P:carbohydrate metabolic process"/>
    <property type="evidence" value="ECO:0007669"/>
    <property type="project" value="InterPro"/>
</dbReference>
<dbReference type="GO" id="GO:0046167">
    <property type="term" value="P:glycerol-3-phosphate biosynthetic process"/>
    <property type="evidence" value="ECO:0007669"/>
    <property type="project" value="UniProtKB-UniRule"/>
</dbReference>
<dbReference type="GO" id="GO:0046168">
    <property type="term" value="P:glycerol-3-phosphate catabolic process"/>
    <property type="evidence" value="ECO:0007669"/>
    <property type="project" value="InterPro"/>
</dbReference>
<dbReference type="GO" id="GO:0006650">
    <property type="term" value="P:glycerophospholipid metabolic process"/>
    <property type="evidence" value="ECO:0007669"/>
    <property type="project" value="UniProtKB-UniRule"/>
</dbReference>
<dbReference type="GO" id="GO:0008654">
    <property type="term" value="P:phospholipid biosynthetic process"/>
    <property type="evidence" value="ECO:0007669"/>
    <property type="project" value="UniProtKB-KW"/>
</dbReference>
<dbReference type="FunFam" id="1.10.1040.10:FF:000001">
    <property type="entry name" value="Glycerol-3-phosphate dehydrogenase [NAD(P)+]"/>
    <property type="match status" value="1"/>
</dbReference>
<dbReference type="FunFam" id="3.40.50.720:FF:000019">
    <property type="entry name" value="Glycerol-3-phosphate dehydrogenase [NAD(P)+]"/>
    <property type="match status" value="1"/>
</dbReference>
<dbReference type="Gene3D" id="1.10.1040.10">
    <property type="entry name" value="N-(1-d-carboxylethyl)-l-norvaline Dehydrogenase, domain 2"/>
    <property type="match status" value="1"/>
</dbReference>
<dbReference type="Gene3D" id="3.40.50.720">
    <property type="entry name" value="NAD(P)-binding Rossmann-like Domain"/>
    <property type="match status" value="1"/>
</dbReference>
<dbReference type="HAMAP" id="MF_00394">
    <property type="entry name" value="NAD_Glyc3P_dehydrog"/>
    <property type="match status" value="1"/>
</dbReference>
<dbReference type="InterPro" id="IPR008927">
    <property type="entry name" value="6-PGluconate_DH-like_C_sf"/>
</dbReference>
<dbReference type="InterPro" id="IPR013328">
    <property type="entry name" value="6PGD_dom2"/>
</dbReference>
<dbReference type="InterPro" id="IPR006168">
    <property type="entry name" value="G3P_DH_NAD-dep"/>
</dbReference>
<dbReference type="InterPro" id="IPR006109">
    <property type="entry name" value="G3P_DH_NAD-dep_C"/>
</dbReference>
<dbReference type="InterPro" id="IPR011128">
    <property type="entry name" value="G3P_DH_NAD-dep_N"/>
</dbReference>
<dbReference type="InterPro" id="IPR036291">
    <property type="entry name" value="NAD(P)-bd_dom_sf"/>
</dbReference>
<dbReference type="NCBIfam" id="NF000940">
    <property type="entry name" value="PRK00094.1-2"/>
    <property type="match status" value="1"/>
</dbReference>
<dbReference type="NCBIfam" id="NF000941">
    <property type="entry name" value="PRK00094.1-3"/>
    <property type="match status" value="1"/>
</dbReference>
<dbReference type="NCBIfam" id="NF000942">
    <property type="entry name" value="PRK00094.1-4"/>
    <property type="match status" value="1"/>
</dbReference>
<dbReference type="PANTHER" id="PTHR11728">
    <property type="entry name" value="GLYCEROL-3-PHOSPHATE DEHYDROGENASE"/>
    <property type="match status" value="1"/>
</dbReference>
<dbReference type="PANTHER" id="PTHR11728:SF1">
    <property type="entry name" value="GLYCEROL-3-PHOSPHATE DEHYDROGENASE [NAD(+)] 2, CHLOROPLASTIC"/>
    <property type="match status" value="1"/>
</dbReference>
<dbReference type="Pfam" id="PF07479">
    <property type="entry name" value="NAD_Gly3P_dh_C"/>
    <property type="match status" value="1"/>
</dbReference>
<dbReference type="Pfam" id="PF01210">
    <property type="entry name" value="NAD_Gly3P_dh_N"/>
    <property type="match status" value="1"/>
</dbReference>
<dbReference type="PIRSF" id="PIRSF000114">
    <property type="entry name" value="Glycerol-3-P_dh"/>
    <property type="match status" value="1"/>
</dbReference>
<dbReference type="PRINTS" id="PR00077">
    <property type="entry name" value="GPDHDRGNASE"/>
</dbReference>
<dbReference type="SUPFAM" id="SSF48179">
    <property type="entry name" value="6-phosphogluconate dehydrogenase C-terminal domain-like"/>
    <property type="match status" value="1"/>
</dbReference>
<dbReference type="SUPFAM" id="SSF51735">
    <property type="entry name" value="NAD(P)-binding Rossmann-fold domains"/>
    <property type="match status" value="1"/>
</dbReference>
<dbReference type="PROSITE" id="PS00957">
    <property type="entry name" value="NAD_G3PDH"/>
    <property type="match status" value="1"/>
</dbReference>
<accession>Q0AXC3</accession>
<keyword id="KW-0963">Cytoplasm</keyword>
<keyword id="KW-0444">Lipid biosynthesis</keyword>
<keyword id="KW-0443">Lipid metabolism</keyword>
<keyword id="KW-0520">NAD</keyword>
<keyword id="KW-0521">NADP</keyword>
<keyword id="KW-0547">Nucleotide-binding</keyword>
<keyword id="KW-0560">Oxidoreductase</keyword>
<keyword id="KW-0594">Phospholipid biosynthesis</keyword>
<keyword id="KW-1208">Phospholipid metabolism</keyword>
<keyword id="KW-1185">Reference proteome</keyword>
<name>GPDA_SYNWW</name>
<proteinExistence type="inferred from homology"/>
<sequence length="343" mass="37596">MPKICILGSGSWGTAQALLLSSKEFQVILWGRIEDGVDSLQQDRENRRFLPGIRLSDTIVATSDLARALKGADIVVMAVPSQSLREVLEKARPYLGKDSCLVNTAKGLEISSGMRMSQVVEDVLGKQSRERYAVLSGPSHAEEVARNIPTAITVASYHKENAFLVQDLYMTPFFRVYTNPDVAGVELGGALKNIIALGTGIASGLGYGDNTQAALLTRGLHEIIRMGEAMGGEARTFSGLSGIGDLVVTCSSRHSRNRQAGILIGQGYSLEETLKQIAMVVEGAHTIRVVHRLACQLRIDMPICTACYNVLYANRKARDEVDDLMRRQKKHEIEEIVKRKKGW</sequence>
<comment type="function">
    <text evidence="1">Catalyzes the reduction of the glycolytic intermediate dihydroxyacetone phosphate (DHAP) to sn-glycerol 3-phosphate (G3P), the key precursor for phospholipid synthesis.</text>
</comment>
<comment type="catalytic activity">
    <reaction evidence="1">
        <text>sn-glycerol 3-phosphate + NAD(+) = dihydroxyacetone phosphate + NADH + H(+)</text>
        <dbReference type="Rhea" id="RHEA:11092"/>
        <dbReference type="ChEBI" id="CHEBI:15378"/>
        <dbReference type="ChEBI" id="CHEBI:57540"/>
        <dbReference type="ChEBI" id="CHEBI:57597"/>
        <dbReference type="ChEBI" id="CHEBI:57642"/>
        <dbReference type="ChEBI" id="CHEBI:57945"/>
        <dbReference type="EC" id="1.1.1.94"/>
    </reaction>
    <physiologicalReaction direction="right-to-left" evidence="1">
        <dbReference type="Rhea" id="RHEA:11094"/>
    </physiologicalReaction>
</comment>
<comment type="catalytic activity">
    <reaction evidence="1">
        <text>sn-glycerol 3-phosphate + NADP(+) = dihydroxyacetone phosphate + NADPH + H(+)</text>
        <dbReference type="Rhea" id="RHEA:11096"/>
        <dbReference type="ChEBI" id="CHEBI:15378"/>
        <dbReference type="ChEBI" id="CHEBI:57597"/>
        <dbReference type="ChEBI" id="CHEBI:57642"/>
        <dbReference type="ChEBI" id="CHEBI:57783"/>
        <dbReference type="ChEBI" id="CHEBI:58349"/>
        <dbReference type="EC" id="1.1.1.94"/>
    </reaction>
    <physiologicalReaction direction="right-to-left" evidence="1">
        <dbReference type="Rhea" id="RHEA:11098"/>
    </physiologicalReaction>
</comment>
<comment type="pathway">
    <text evidence="1">Membrane lipid metabolism; glycerophospholipid metabolism.</text>
</comment>
<comment type="subcellular location">
    <subcellularLocation>
        <location evidence="1">Cytoplasm</location>
    </subcellularLocation>
</comment>
<comment type="similarity">
    <text evidence="1">Belongs to the NAD-dependent glycerol-3-phosphate dehydrogenase family.</text>
</comment>
<gene>
    <name evidence="1" type="primary">gpsA</name>
    <name type="ordered locus">Swol_1323</name>
</gene>
<evidence type="ECO:0000255" key="1">
    <source>
        <dbReference type="HAMAP-Rule" id="MF_00394"/>
    </source>
</evidence>